<sequence>MAKTASPGATPPGNGTEPLPDNYEMALAELETLVARMEGGALSLEDSLAAYRRGATLVAFCQQQLEKVEQQVRVLDGATLKPLSSGTAATDGEDDDL</sequence>
<proteinExistence type="inferred from homology"/>
<name>EX7S_BURCJ</name>
<dbReference type="EC" id="3.1.11.6" evidence="1"/>
<dbReference type="EMBL" id="AM747721">
    <property type="protein sequence ID" value="CAR54766.1"/>
    <property type="molecule type" value="Genomic_DNA"/>
</dbReference>
<dbReference type="RefSeq" id="WP_006479428.1">
    <property type="nucleotide sequence ID" value="NC_011001.1"/>
</dbReference>
<dbReference type="SMR" id="B4EN27"/>
<dbReference type="KEGG" id="bcj:BCAM0909"/>
<dbReference type="eggNOG" id="COG1722">
    <property type="taxonomic scope" value="Bacteria"/>
</dbReference>
<dbReference type="HOGENOM" id="CLU_145918_2_0_4"/>
<dbReference type="BioCyc" id="BCEN216591:G1G1V-4892-MONOMER"/>
<dbReference type="Proteomes" id="UP000001035">
    <property type="component" value="Chromosome 2"/>
</dbReference>
<dbReference type="GO" id="GO:0005829">
    <property type="term" value="C:cytosol"/>
    <property type="evidence" value="ECO:0007669"/>
    <property type="project" value="TreeGrafter"/>
</dbReference>
<dbReference type="GO" id="GO:0009318">
    <property type="term" value="C:exodeoxyribonuclease VII complex"/>
    <property type="evidence" value="ECO:0007669"/>
    <property type="project" value="InterPro"/>
</dbReference>
<dbReference type="GO" id="GO:0008855">
    <property type="term" value="F:exodeoxyribonuclease VII activity"/>
    <property type="evidence" value="ECO:0007669"/>
    <property type="project" value="UniProtKB-UniRule"/>
</dbReference>
<dbReference type="GO" id="GO:0006308">
    <property type="term" value="P:DNA catabolic process"/>
    <property type="evidence" value="ECO:0007669"/>
    <property type="project" value="UniProtKB-UniRule"/>
</dbReference>
<dbReference type="Gene3D" id="1.10.287.1040">
    <property type="entry name" value="Exonuclease VII, small subunit"/>
    <property type="match status" value="1"/>
</dbReference>
<dbReference type="HAMAP" id="MF_00337">
    <property type="entry name" value="Exonuc_7_S"/>
    <property type="match status" value="1"/>
</dbReference>
<dbReference type="InterPro" id="IPR003761">
    <property type="entry name" value="Exonuc_VII_S"/>
</dbReference>
<dbReference type="InterPro" id="IPR037004">
    <property type="entry name" value="Exonuc_VII_ssu_sf"/>
</dbReference>
<dbReference type="NCBIfam" id="NF002141">
    <property type="entry name" value="PRK00977.1-5"/>
    <property type="match status" value="1"/>
</dbReference>
<dbReference type="NCBIfam" id="TIGR01280">
    <property type="entry name" value="xseB"/>
    <property type="match status" value="1"/>
</dbReference>
<dbReference type="PANTHER" id="PTHR34137">
    <property type="entry name" value="EXODEOXYRIBONUCLEASE 7 SMALL SUBUNIT"/>
    <property type="match status" value="1"/>
</dbReference>
<dbReference type="PANTHER" id="PTHR34137:SF1">
    <property type="entry name" value="EXODEOXYRIBONUCLEASE 7 SMALL SUBUNIT"/>
    <property type="match status" value="1"/>
</dbReference>
<dbReference type="Pfam" id="PF02609">
    <property type="entry name" value="Exonuc_VII_S"/>
    <property type="match status" value="1"/>
</dbReference>
<dbReference type="SUPFAM" id="SSF116842">
    <property type="entry name" value="XseB-like"/>
    <property type="match status" value="1"/>
</dbReference>
<keyword id="KW-0963">Cytoplasm</keyword>
<keyword id="KW-0269">Exonuclease</keyword>
<keyword id="KW-0378">Hydrolase</keyword>
<keyword id="KW-0540">Nuclease</keyword>
<protein>
    <recommendedName>
        <fullName evidence="1">Exodeoxyribonuclease 7 small subunit</fullName>
        <ecNumber evidence="1">3.1.11.6</ecNumber>
    </recommendedName>
    <alternativeName>
        <fullName evidence="1">Exodeoxyribonuclease VII small subunit</fullName>
        <shortName evidence="1">Exonuclease VII small subunit</shortName>
    </alternativeName>
</protein>
<feature type="chain" id="PRO_1000119905" description="Exodeoxyribonuclease 7 small subunit">
    <location>
        <begin position="1"/>
        <end position="97"/>
    </location>
</feature>
<feature type="region of interest" description="Disordered" evidence="2">
    <location>
        <begin position="1"/>
        <end position="22"/>
    </location>
</feature>
<organism>
    <name type="scientific">Burkholderia cenocepacia (strain ATCC BAA-245 / DSM 16553 / LMG 16656 / NCTC 13227 / J2315 / CF5610)</name>
    <name type="common">Burkholderia cepacia (strain J2315)</name>
    <dbReference type="NCBI Taxonomy" id="216591"/>
    <lineage>
        <taxon>Bacteria</taxon>
        <taxon>Pseudomonadati</taxon>
        <taxon>Pseudomonadota</taxon>
        <taxon>Betaproteobacteria</taxon>
        <taxon>Burkholderiales</taxon>
        <taxon>Burkholderiaceae</taxon>
        <taxon>Burkholderia</taxon>
        <taxon>Burkholderia cepacia complex</taxon>
    </lineage>
</organism>
<comment type="function">
    <text evidence="1">Bidirectionally degrades single-stranded DNA into large acid-insoluble oligonucleotides, which are then degraded further into small acid-soluble oligonucleotides.</text>
</comment>
<comment type="catalytic activity">
    <reaction evidence="1">
        <text>Exonucleolytic cleavage in either 5'- to 3'- or 3'- to 5'-direction to yield nucleoside 5'-phosphates.</text>
        <dbReference type="EC" id="3.1.11.6"/>
    </reaction>
</comment>
<comment type="subunit">
    <text evidence="1">Heterooligomer composed of large and small subunits.</text>
</comment>
<comment type="subcellular location">
    <subcellularLocation>
        <location evidence="1">Cytoplasm</location>
    </subcellularLocation>
</comment>
<comment type="similarity">
    <text evidence="1">Belongs to the XseB family.</text>
</comment>
<reference key="1">
    <citation type="journal article" date="2009" name="J. Bacteriol.">
        <title>The genome of Burkholderia cenocepacia J2315, an epidemic pathogen of cystic fibrosis patients.</title>
        <authorList>
            <person name="Holden M.T."/>
            <person name="Seth-Smith H.M."/>
            <person name="Crossman L.C."/>
            <person name="Sebaihia M."/>
            <person name="Bentley S.D."/>
            <person name="Cerdeno-Tarraga A.M."/>
            <person name="Thomson N.R."/>
            <person name="Bason N."/>
            <person name="Quail M.A."/>
            <person name="Sharp S."/>
            <person name="Cherevach I."/>
            <person name="Churcher C."/>
            <person name="Goodhead I."/>
            <person name="Hauser H."/>
            <person name="Holroyd N."/>
            <person name="Mungall K."/>
            <person name="Scott P."/>
            <person name="Walker D."/>
            <person name="White B."/>
            <person name="Rose H."/>
            <person name="Iversen P."/>
            <person name="Mil-Homens D."/>
            <person name="Rocha E.P."/>
            <person name="Fialho A.M."/>
            <person name="Baldwin A."/>
            <person name="Dowson C."/>
            <person name="Barrell B.G."/>
            <person name="Govan J.R."/>
            <person name="Vandamme P."/>
            <person name="Hart C.A."/>
            <person name="Mahenthiralingam E."/>
            <person name="Parkhill J."/>
        </authorList>
    </citation>
    <scope>NUCLEOTIDE SEQUENCE [LARGE SCALE GENOMIC DNA]</scope>
    <source>
        <strain>ATCC BAA-245 / DSM 16553 / LMG 16656 / NCTC 13227 / J2315 / CF5610</strain>
    </source>
</reference>
<evidence type="ECO:0000255" key="1">
    <source>
        <dbReference type="HAMAP-Rule" id="MF_00337"/>
    </source>
</evidence>
<evidence type="ECO:0000256" key="2">
    <source>
        <dbReference type="SAM" id="MobiDB-lite"/>
    </source>
</evidence>
<gene>
    <name evidence="1" type="primary">xseB</name>
    <name type="ordered locus">BceJ2315_43640</name>
    <name type="ORF">BCAM0909</name>
</gene>
<accession>B4EN27</accession>